<name>HSCB_PSESM</name>
<proteinExistence type="inferred from homology"/>
<comment type="function">
    <text evidence="1">Co-chaperone involved in the maturation of iron-sulfur cluster-containing proteins. Seems to help targeting proteins to be folded toward HscA.</text>
</comment>
<comment type="subunit">
    <text evidence="1">Interacts with HscA and stimulates its ATPase activity.</text>
</comment>
<comment type="similarity">
    <text evidence="1">Belongs to the HscB family.</text>
</comment>
<dbReference type="EMBL" id="AE016853">
    <property type="protein sequence ID" value="AAO54947.1"/>
    <property type="molecule type" value="Genomic_DNA"/>
</dbReference>
<dbReference type="RefSeq" id="NP_791252.1">
    <property type="nucleotide sequence ID" value="NC_004578.1"/>
</dbReference>
<dbReference type="RefSeq" id="WP_005771027.1">
    <property type="nucleotide sequence ID" value="NC_004578.1"/>
</dbReference>
<dbReference type="SMR" id="Q886Z8"/>
<dbReference type="STRING" id="223283.PSPTO_1426"/>
<dbReference type="GeneID" id="1183063"/>
<dbReference type="KEGG" id="pst:PSPTO_1426"/>
<dbReference type="PATRIC" id="fig|223283.9.peg.1446"/>
<dbReference type="eggNOG" id="COG1076">
    <property type="taxonomic scope" value="Bacteria"/>
</dbReference>
<dbReference type="HOGENOM" id="CLU_068529_2_0_6"/>
<dbReference type="OrthoDB" id="287587at2"/>
<dbReference type="PhylomeDB" id="Q886Z8"/>
<dbReference type="Proteomes" id="UP000002515">
    <property type="component" value="Chromosome"/>
</dbReference>
<dbReference type="GO" id="GO:1990230">
    <property type="term" value="C:iron-sulfur cluster transfer complex"/>
    <property type="evidence" value="ECO:0007669"/>
    <property type="project" value="TreeGrafter"/>
</dbReference>
<dbReference type="GO" id="GO:0001671">
    <property type="term" value="F:ATPase activator activity"/>
    <property type="evidence" value="ECO:0007669"/>
    <property type="project" value="InterPro"/>
</dbReference>
<dbReference type="GO" id="GO:0051087">
    <property type="term" value="F:protein-folding chaperone binding"/>
    <property type="evidence" value="ECO:0007669"/>
    <property type="project" value="InterPro"/>
</dbReference>
<dbReference type="GO" id="GO:0044571">
    <property type="term" value="P:[2Fe-2S] cluster assembly"/>
    <property type="evidence" value="ECO:0007669"/>
    <property type="project" value="InterPro"/>
</dbReference>
<dbReference type="GO" id="GO:0051259">
    <property type="term" value="P:protein complex oligomerization"/>
    <property type="evidence" value="ECO:0007669"/>
    <property type="project" value="InterPro"/>
</dbReference>
<dbReference type="GO" id="GO:0006457">
    <property type="term" value="P:protein folding"/>
    <property type="evidence" value="ECO:0007669"/>
    <property type="project" value="UniProtKB-UniRule"/>
</dbReference>
<dbReference type="CDD" id="cd06257">
    <property type="entry name" value="DnaJ"/>
    <property type="match status" value="1"/>
</dbReference>
<dbReference type="Gene3D" id="1.10.287.110">
    <property type="entry name" value="DnaJ domain"/>
    <property type="match status" value="1"/>
</dbReference>
<dbReference type="Gene3D" id="1.20.1280.20">
    <property type="entry name" value="HscB, C-terminal domain"/>
    <property type="match status" value="1"/>
</dbReference>
<dbReference type="HAMAP" id="MF_00682">
    <property type="entry name" value="HscB"/>
    <property type="match status" value="1"/>
</dbReference>
<dbReference type="InterPro" id="IPR001623">
    <property type="entry name" value="DnaJ_domain"/>
</dbReference>
<dbReference type="InterPro" id="IPR004640">
    <property type="entry name" value="HscB"/>
</dbReference>
<dbReference type="InterPro" id="IPR036386">
    <property type="entry name" value="HscB_C_sf"/>
</dbReference>
<dbReference type="InterPro" id="IPR009073">
    <property type="entry name" value="HscB_oligo_C"/>
</dbReference>
<dbReference type="InterPro" id="IPR036869">
    <property type="entry name" value="J_dom_sf"/>
</dbReference>
<dbReference type="NCBIfam" id="TIGR00714">
    <property type="entry name" value="hscB"/>
    <property type="match status" value="1"/>
</dbReference>
<dbReference type="NCBIfam" id="NF001420">
    <property type="entry name" value="PRK00294.1"/>
    <property type="match status" value="1"/>
</dbReference>
<dbReference type="PANTHER" id="PTHR14021">
    <property type="entry name" value="IRON-SULFUR CLUSTER CO-CHAPERONE PROTEIN HSCB"/>
    <property type="match status" value="1"/>
</dbReference>
<dbReference type="PANTHER" id="PTHR14021:SF15">
    <property type="entry name" value="IRON-SULFUR CLUSTER CO-CHAPERONE PROTEIN HSCB"/>
    <property type="match status" value="1"/>
</dbReference>
<dbReference type="Pfam" id="PF00226">
    <property type="entry name" value="DnaJ"/>
    <property type="match status" value="1"/>
</dbReference>
<dbReference type="Pfam" id="PF07743">
    <property type="entry name" value="HSCB_C"/>
    <property type="match status" value="1"/>
</dbReference>
<dbReference type="SMART" id="SM00271">
    <property type="entry name" value="DnaJ"/>
    <property type="match status" value="1"/>
</dbReference>
<dbReference type="SUPFAM" id="SSF46565">
    <property type="entry name" value="Chaperone J-domain"/>
    <property type="match status" value="1"/>
</dbReference>
<dbReference type="SUPFAM" id="SSF47144">
    <property type="entry name" value="HSC20 (HSCB), C-terminal oligomerisation domain"/>
    <property type="match status" value="1"/>
</dbReference>
<dbReference type="PROSITE" id="PS50076">
    <property type="entry name" value="DNAJ_2"/>
    <property type="match status" value="1"/>
</dbReference>
<keyword id="KW-0143">Chaperone</keyword>
<keyword id="KW-1185">Reference proteome</keyword>
<protein>
    <recommendedName>
        <fullName evidence="1">Co-chaperone protein HscB homolog</fullName>
    </recommendedName>
</protein>
<feature type="chain" id="PRO_0000070981" description="Co-chaperone protein HscB homolog">
    <location>
        <begin position="1"/>
        <end position="173"/>
    </location>
</feature>
<feature type="domain" description="J" evidence="1">
    <location>
        <begin position="5"/>
        <end position="77"/>
    </location>
</feature>
<reference key="1">
    <citation type="journal article" date="2003" name="Proc. Natl. Acad. Sci. U.S.A.">
        <title>The complete genome sequence of the Arabidopsis and tomato pathogen Pseudomonas syringae pv. tomato DC3000.</title>
        <authorList>
            <person name="Buell C.R."/>
            <person name="Joardar V."/>
            <person name="Lindeberg M."/>
            <person name="Selengut J."/>
            <person name="Paulsen I.T."/>
            <person name="Gwinn M.L."/>
            <person name="Dodson R.J."/>
            <person name="DeBoy R.T."/>
            <person name="Durkin A.S."/>
            <person name="Kolonay J.F."/>
            <person name="Madupu R."/>
            <person name="Daugherty S.C."/>
            <person name="Brinkac L.M."/>
            <person name="Beanan M.J."/>
            <person name="Haft D.H."/>
            <person name="Nelson W.C."/>
            <person name="Davidsen T.M."/>
            <person name="Zafar N."/>
            <person name="Zhou L."/>
            <person name="Liu J."/>
            <person name="Yuan Q."/>
            <person name="Khouri H.M."/>
            <person name="Fedorova N.B."/>
            <person name="Tran B."/>
            <person name="Russell D."/>
            <person name="Berry K.J."/>
            <person name="Utterback T.R."/>
            <person name="Van Aken S.E."/>
            <person name="Feldblyum T.V."/>
            <person name="D'Ascenzo M."/>
            <person name="Deng W.-L."/>
            <person name="Ramos A.R."/>
            <person name="Alfano J.R."/>
            <person name="Cartinhour S."/>
            <person name="Chatterjee A.K."/>
            <person name="Delaney T.P."/>
            <person name="Lazarowitz S.G."/>
            <person name="Martin G.B."/>
            <person name="Schneider D.J."/>
            <person name="Tang X."/>
            <person name="Bender C.L."/>
            <person name="White O."/>
            <person name="Fraser C.M."/>
            <person name="Collmer A."/>
        </authorList>
    </citation>
    <scope>NUCLEOTIDE SEQUENCE [LARGE SCALE GENOMIC DNA]</scope>
    <source>
        <strain>ATCC BAA-871 / DC3000</strain>
    </source>
</reference>
<organism>
    <name type="scientific">Pseudomonas syringae pv. tomato (strain ATCC BAA-871 / DC3000)</name>
    <dbReference type="NCBI Taxonomy" id="223283"/>
    <lineage>
        <taxon>Bacteria</taxon>
        <taxon>Pseudomonadati</taxon>
        <taxon>Pseudomonadota</taxon>
        <taxon>Gammaproteobacteria</taxon>
        <taxon>Pseudomonadales</taxon>
        <taxon>Pseudomonadaceae</taxon>
        <taxon>Pseudomonas</taxon>
    </lineage>
</organism>
<sequence>MGSPCHFALFELKPEFQLDLDQLATRYRELARNVHPDRFADAPEREQRLALERSASLNEAYQTLKSPPKRARYLLAMNGNEVPLEVTVHDPEFLLQQMQLREDLEDLQDEADLAGVATFKRQLKVAQDELNQSFAACWNDAAQREHAEKLMRRMQFLDKLSHEVRQLEERLDD</sequence>
<gene>
    <name evidence="1" type="primary">hscB</name>
    <name type="ordered locus">PSPTO_1426</name>
</gene>
<evidence type="ECO:0000255" key="1">
    <source>
        <dbReference type="HAMAP-Rule" id="MF_00682"/>
    </source>
</evidence>
<accession>Q886Z8</accession>